<feature type="chain" id="PRO_1000085078" description="Phosphatidylglycerol--prolipoprotein diacylglyceryl transferase">
    <location>
        <begin position="1"/>
        <end position="269"/>
    </location>
</feature>
<feature type="transmembrane region" description="Helical" evidence="1">
    <location>
        <begin position="10"/>
        <end position="30"/>
    </location>
</feature>
<feature type="transmembrane region" description="Helical" evidence="1">
    <location>
        <begin position="56"/>
        <end position="76"/>
    </location>
</feature>
<feature type="transmembrane region" description="Helical" evidence="1">
    <location>
        <begin position="91"/>
        <end position="111"/>
    </location>
</feature>
<feature type="transmembrane region" description="Helical" evidence="1">
    <location>
        <begin position="126"/>
        <end position="146"/>
    </location>
</feature>
<feature type="transmembrane region" description="Helical" evidence="1">
    <location>
        <begin position="172"/>
        <end position="192"/>
    </location>
</feature>
<feature type="transmembrane region" description="Helical" evidence="1">
    <location>
        <begin position="200"/>
        <end position="220"/>
    </location>
</feature>
<feature type="transmembrane region" description="Helical" evidence="1">
    <location>
        <begin position="237"/>
        <end position="257"/>
    </location>
</feature>
<feature type="binding site" evidence="1">
    <location>
        <position position="139"/>
    </location>
    <ligand>
        <name>a 1,2-diacyl-sn-glycero-3-phospho-(1'-sn-glycerol)</name>
        <dbReference type="ChEBI" id="CHEBI:64716"/>
    </ligand>
</feature>
<protein>
    <recommendedName>
        <fullName evidence="1">Phosphatidylglycerol--prolipoprotein diacylglyceryl transferase</fullName>
        <ecNumber evidence="1">2.5.1.145</ecNumber>
    </recommendedName>
</protein>
<comment type="function">
    <text evidence="1">Catalyzes the transfer of the diacylglyceryl group from phosphatidylglycerol to the sulfhydryl group of the N-terminal cysteine of a prolipoprotein, the first step in the formation of mature lipoproteins.</text>
</comment>
<comment type="catalytic activity">
    <reaction evidence="1">
        <text>L-cysteinyl-[prolipoprotein] + a 1,2-diacyl-sn-glycero-3-phospho-(1'-sn-glycerol) = an S-1,2-diacyl-sn-glyceryl-L-cysteinyl-[prolipoprotein] + sn-glycerol 1-phosphate + H(+)</text>
        <dbReference type="Rhea" id="RHEA:56712"/>
        <dbReference type="Rhea" id="RHEA-COMP:14679"/>
        <dbReference type="Rhea" id="RHEA-COMP:14680"/>
        <dbReference type="ChEBI" id="CHEBI:15378"/>
        <dbReference type="ChEBI" id="CHEBI:29950"/>
        <dbReference type="ChEBI" id="CHEBI:57685"/>
        <dbReference type="ChEBI" id="CHEBI:64716"/>
        <dbReference type="ChEBI" id="CHEBI:140658"/>
        <dbReference type="EC" id="2.5.1.145"/>
    </reaction>
</comment>
<comment type="pathway">
    <text evidence="1">Protein modification; lipoprotein biosynthesis (diacylglyceryl transfer).</text>
</comment>
<comment type="subcellular location">
    <subcellularLocation>
        <location evidence="1">Cell inner membrane</location>
        <topology evidence="1">Multi-pass membrane protein</topology>
    </subcellularLocation>
</comment>
<comment type="similarity">
    <text evidence="1">Belongs to the Lgt family.</text>
</comment>
<accession>A6W1R8</accession>
<organism>
    <name type="scientific">Marinomonas sp. (strain MWYL1)</name>
    <dbReference type="NCBI Taxonomy" id="400668"/>
    <lineage>
        <taxon>Bacteria</taxon>
        <taxon>Pseudomonadati</taxon>
        <taxon>Pseudomonadota</taxon>
        <taxon>Gammaproteobacteria</taxon>
        <taxon>Oceanospirillales</taxon>
        <taxon>Oceanospirillaceae</taxon>
        <taxon>Marinomonas</taxon>
    </lineage>
</organism>
<sequence>MISYPNIDPIAVSIGPISVHWYGIMYLIGFAGAYLCGMYRAKRSNGLWTPEMVSDAIFYGALGVILGGRVGYILFYQFPAFVDNPLILVRIWEGGMSFHGGLLGVIIAMFFFARRYNKHLVDVTDFLAPFVPIGLGAGRLGNFIGGELWGKPTDVSWAMIFPNDPLQLARHPSQLYQFALEGVALFCILWFFSQRTKPRYCVSGMFLLFYGIFRILVEFVREPDIQIGYIAFGWLTEGQLLSLPMVIIGAGLIMAGLKLNTFPKASTSK</sequence>
<reference key="1">
    <citation type="submission" date="2007-06" db="EMBL/GenBank/DDBJ databases">
        <title>Complete sequence of Marinomonas sp. MWYL1.</title>
        <authorList>
            <consortium name="US DOE Joint Genome Institute"/>
            <person name="Copeland A."/>
            <person name="Lucas S."/>
            <person name="Lapidus A."/>
            <person name="Barry K."/>
            <person name="Glavina del Rio T."/>
            <person name="Dalin E."/>
            <person name="Tice H."/>
            <person name="Pitluck S."/>
            <person name="Kiss H."/>
            <person name="Brettin T."/>
            <person name="Bruce D."/>
            <person name="Detter J.C."/>
            <person name="Han C."/>
            <person name="Schmutz J."/>
            <person name="Larimer F."/>
            <person name="Land M."/>
            <person name="Hauser L."/>
            <person name="Kyrpides N."/>
            <person name="Kim E."/>
            <person name="Johnston A.W.B."/>
            <person name="Todd J.D."/>
            <person name="Rogers R."/>
            <person name="Wexler M."/>
            <person name="Bond P.L."/>
            <person name="Li Y."/>
            <person name="Richardson P."/>
        </authorList>
    </citation>
    <scope>NUCLEOTIDE SEQUENCE [LARGE SCALE GENOMIC DNA]</scope>
    <source>
        <strain>MWYL1</strain>
    </source>
</reference>
<proteinExistence type="inferred from homology"/>
<dbReference type="EC" id="2.5.1.145" evidence="1"/>
<dbReference type="EMBL" id="CP000749">
    <property type="protein sequence ID" value="ABR72647.1"/>
    <property type="molecule type" value="Genomic_DNA"/>
</dbReference>
<dbReference type="SMR" id="A6W1R8"/>
<dbReference type="STRING" id="400668.Mmwyl1_3746"/>
<dbReference type="KEGG" id="mmw:Mmwyl1_3746"/>
<dbReference type="eggNOG" id="COG0682">
    <property type="taxonomic scope" value="Bacteria"/>
</dbReference>
<dbReference type="HOGENOM" id="CLU_013386_1_0_6"/>
<dbReference type="OrthoDB" id="871140at2"/>
<dbReference type="UniPathway" id="UPA00664"/>
<dbReference type="GO" id="GO:0005886">
    <property type="term" value="C:plasma membrane"/>
    <property type="evidence" value="ECO:0007669"/>
    <property type="project" value="UniProtKB-SubCell"/>
</dbReference>
<dbReference type="GO" id="GO:0008961">
    <property type="term" value="F:phosphatidylglycerol-prolipoprotein diacylglyceryl transferase activity"/>
    <property type="evidence" value="ECO:0007669"/>
    <property type="project" value="UniProtKB-UniRule"/>
</dbReference>
<dbReference type="GO" id="GO:0042158">
    <property type="term" value="P:lipoprotein biosynthetic process"/>
    <property type="evidence" value="ECO:0007669"/>
    <property type="project" value="UniProtKB-UniRule"/>
</dbReference>
<dbReference type="HAMAP" id="MF_01147">
    <property type="entry name" value="Lgt"/>
    <property type="match status" value="1"/>
</dbReference>
<dbReference type="InterPro" id="IPR001640">
    <property type="entry name" value="Lgt"/>
</dbReference>
<dbReference type="NCBIfam" id="TIGR00544">
    <property type="entry name" value="lgt"/>
    <property type="match status" value="1"/>
</dbReference>
<dbReference type="PANTHER" id="PTHR30589:SF0">
    <property type="entry name" value="PHOSPHATIDYLGLYCEROL--PROLIPOPROTEIN DIACYLGLYCERYL TRANSFERASE"/>
    <property type="match status" value="1"/>
</dbReference>
<dbReference type="PANTHER" id="PTHR30589">
    <property type="entry name" value="PROLIPOPROTEIN DIACYLGLYCERYL TRANSFERASE"/>
    <property type="match status" value="1"/>
</dbReference>
<dbReference type="Pfam" id="PF01790">
    <property type="entry name" value="LGT"/>
    <property type="match status" value="1"/>
</dbReference>
<dbReference type="PROSITE" id="PS01311">
    <property type="entry name" value="LGT"/>
    <property type="match status" value="1"/>
</dbReference>
<gene>
    <name evidence="1" type="primary">lgt</name>
    <name type="ordered locus">Mmwyl1_3746</name>
</gene>
<keyword id="KW-0997">Cell inner membrane</keyword>
<keyword id="KW-1003">Cell membrane</keyword>
<keyword id="KW-0472">Membrane</keyword>
<keyword id="KW-0808">Transferase</keyword>
<keyword id="KW-0812">Transmembrane</keyword>
<keyword id="KW-1133">Transmembrane helix</keyword>
<evidence type="ECO:0000255" key="1">
    <source>
        <dbReference type="HAMAP-Rule" id="MF_01147"/>
    </source>
</evidence>
<name>LGT_MARMS</name>